<sequence length="442" mass="48495">MAITVRRSTMVRPAWETPRVRLWNSNLDLVVPRFHTPSVYFYRRGPEGGGAPEGFFDGERMRRALAEALVPFYPMAGRLARDEDGRVEIDCNGEGVLFVEADAPDASVDDYGDFAPTMELKRLIPAVDYTDDISSFSLLVLQVTYFKCGGVSLGVGMQHHVADGMSGLHFINSWSDLCRGTQIAIMPFIDRTLLRARDPPTPSYPHVEYQPAPAMLSSVPQSVTANKTTPPPTAVDIFKLTRSDLGRLRSQLPSGEGAPRFSTYAVLAAHVWRCVSLARGLPSEQPTKLYCATDGRQRLQPPLPEGYFGNVIFTATPLAEAGKVTSGLADGAAVIQEALDRMNDSYCRSALDYLELQPDLSALVRGAHTFRCPNLGLTSWVRLPIHDADFGWGRPVFMGPGGIAYEGLAFVLPSANKDGSLSIAISLQAEHMEKFRKLIFEV</sequence>
<gene>
    <name evidence="4" type="primary">HCT1</name>
    <name evidence="6" type="ordered locus">Os04g0500700</name>
    <name evidence="5" type="ordered locus">LOC_Os04g42250</name>
    <name evidence="8" type="ORF">OsJ_15346</name>
    <name evidence="7" type="ORF">OSJNBa0029H02.19</name>
</gene>
<reference key="1">
    <citation type="journal article" date="2002" name="Nature">
        <title>Sequence and analysis of rice chromosome 4.</title>
        <authorList>
            <person name="Feng Q."/>
            <person name="Zhang Y."/>
            <person name="Hao P."/>
            <person name="Wang S."/>
            <person name="Fu G."/>
            <person name="Huang Y."/>
            <person name="Li Y."/>
            <person name="Zhu J."/>
            <person name="Liu Y."/>
            <person name="Hu X."/>
            <person name="Jia P."/>
            <person name="Zhang Y."/>
            <person name="Zhao Q."/>
            <person name="Ying K."/>
            <person name="Yu S."/>
            <person name="Tang Y."/>
            <person name="Weng Q."/>
            <person name="Zhang L."/>
            <person name="Lu Y."/>
            <person name="Mu J."/>
            <person name="Lu Y."/>
            <person name="Zhang L.S."/>
            <person name="Yu Z."/>
            <person name="Fan D."/>
            <person name="Liu X."/>
            <person name="Lu T."/>
            <person name="Li C."/>
            <person name="Wu Y."/>
            <person name="Sun T."/>
            <person name="Lei H."/>
            <person name="Li T."/>
            <person name="Hu H."/>
            <person name="Guan J."/>
            <person name="Wu M."/>
            <person name="Zhang R."/>
            <person name="Zhou B."/>
            <person name="Chen Z."/>
            <person name="Chen L."/>
            <person name="Jin Z."/>
            <person name="Wang R."/>
            <person name="Yin H."/>
            <person name="Cai Z."/>
            <person name="Ren S."/>
            <person name="Lv G."/>
            <person name="Gu W."/>
            <person name="Zhu G."/>
            <person name="Tu Y."/>
            <person name="Jia J."/>
            <person name="Zhang Y."/>
            <person name="Chen J."/>
            <person name="Kang H."/>
            <person name="Chen X."/>
            <person name="Shao C."/>
            <person name="Sun Y."/>
            <person name="Hu Q."/>
            <person name="Zhang X."/>
            <person name="Zhang W."/>
            <person name="Wang L."/>
            <person name="Ding C."/>
            <person name="Sheng H."/>
            <person name="Gu J."/>
            <person name="Chen S."/>
            <person name="Ni L."/>
            <person name="Zhu F."/>
            <person name="Chen W."/>
            <person name="Lan L."/>
            <person name="Lai Y."/>
            <person name="Cheng Z."/>
            <person name="Gu M."/>
            <person name="Jiang J."/>
            <person name="Li J."/>
            <person name="Hong G."/>
            <person name="Xue Y."/>
            <person name="Han B."/>
        </authorList>
    </citation>
    <scope>NUCLEOTIDE SEQUENCE [LARGE SCALE GENOMIC DNA]</scope>
    <source>
        <strain>cv. Nipponbare</strain>
    </source>
</reference>
<reference key="2">
    <citation type="journal article" date="2005" name="Nature">
        <title>The map-based sequence of the rice genome.</title>
        <authorList>
            <consortium name="International rice genome sequencing project (IRGSP)"/>
        </authorList>
    </citation>
    <scope>NUCLEOTIDE SEQUENCE [LARGE SCALE GENOMIC DNA]</scope>
    <source>
        <strain>cv. Nipponbare</strain>
    </source>
</reference>
<reference key="3">
    <citation type="journal article" date="2008" name="Nucleic Acids Res.">
        <title>The rice annotation project database (RAP-DB): 2008 update.</title>
        <authorList>
            <consortium name="The rice annotation project (RAP)"/>
        </authorList>
    </citation>
    <scope>GENOME REANNOTATION</scope>
    <source>
        <strain>cv. Nipponbare</strain>
    </source>
</reference>
<reference key="4">
    <citation type="journal article" date="2013" name="Rice">
        <title>Improvement of the Oryza sativa Nipponbare reference genome using next generation sequence and optical map data.</title>
        <authorList>
            <person name="Kawahara Y."/>
            <person name="de la Bastide M."/>
            <person name="Hamilton J.P."/>
            <person name="Kanamori H."/>
            <person name="McCombie W.R."/>
            <person name="Ouyang S."/>
            <person name="Schwartz D.C."/>
            <person name="Tanaka T."/>
            <person name="Wu J."/>
            <person name="Zhou S."/>
            <person name="Childs K.L."/>
            <person name="Davidson R.M."/>
            <person name="Lin H."/>
            <person name="Quesada-Ocampo L."/>
            <person name="Vaillancourt B."/>
            <person name="Sakai H."/>
            <person name="Lee S.S."/>
            <person name="Kim J."/>
            <person name="Numa H."/>
            <person name="Itoh T."/>
            <person name="Buell C.R."/>
            <person name="Matsumoto T."/>
        </authorList>
    </citation>
    <scope>GENOME REANNOTATION</scope>
    <source>
        <strain>cv. Nipponbare</strain>
    </source>
</reference>
<reference key="5">
    <citation type="journal article" date="2005" name="PLoS Biol.">
        <title>The genomes of Oryza sativa: a history of duplications.</title>
        <authorList>
            <person name="Yu J."/>
            <person name="Wang J."/>
            <person name="Lin W."/>
            <person name="Li S."/>
            <person name="Li H."/>
            <person name="Zhou J."/>
            <person name="Ni P."/>
            <person name="Dong W."/>
            <person name="Hu S."/>
            <person name="Zeng C."/>
            <person name="Zhang J."/>
            <person name="Zhang Y."/>
            <person name="Li R."/>
            <person name="Xu Z."/>
            <person name="Li S."/>
            <person name="Li X."/>
            <person name="Zheng H."/>
            <person name="Cong L."/>
            <person name="Lin L."/>
            <person name="Yin J."/>
            <person name="Geng J."/>
            <person name="Li G."/>
            <person name="Shi J."/>
            <person name="Liu J."/>
            <person name="Lv H."/>
            <person name="Li J."/>
            <person name="Wang J."/>
            <person name="Deng Y."/>
            <person name="Ran L."/>
            <person name="Shi X."/>
            <person name="Wang X."/>
            <person name="Wu Q."/>
            <person name="Li C."/>
            <person name="Ren X."/>
            <person name="Wang J."/>
            <person name="Wang X."/>
            <person name="Li D."/>
            <person name="Liu D."/>
            <person name="Zhang X."/>
            <person name="Ji Z."/>
            <person name="Zhao W."/>
            <person name="Sun Y."/>
            <person name="Zhang Z."/>
            <person name="Bao J."/>
            <person name="Han Y."/>
            <person name="Dong L."/>
            <person name="Ji J."/>
            <person name="Chen P."/>
            <person name="Wu S."/>
            <person name="Liu J."/>
            <person name="Xiao Y."/>
            <person name="Bu D."/>
            <person name="Tan J."/>
            <person name="Yang L."/>
            <person name="Ye C."/>
            <person name="Zhang J."/>
            <person name="Xu J."/>
            <person name="Zhou Y."/>
            <person name="Yu Y."/>
            <person name="Zhang B."/>
            <person name="Zhuang S."/>
            <person name="Wei H."/>
            <person name="Liu B."/>
            <person name="Lei M."/>
            <person name="Yu H."/>
            <person name="Li Y."/>
            <person name="Xu H."/>
            <person name="Wei S."/>
            <person name="He X."/>
            <person name="Fang L."/>
            <person name="Zhang Z."/>
            <person name="Zhang Y."/>
            <person name="Huang X."/>
            <person name="Su Z."/>
            <person name="Tong W."/>
            <person name="Li J."/>
            <person name="Tong Z."/>
            <person name="Li S."/>
            <person name="Ye J."/>
            <person name="Wang L."/>
            <person name="Fang L."/>
            <person name="Lei T."/>
            <person name="Chen C.-S."/>
            <person name="Chen H.-C."/>
            <person name="Xu Z."/>
            <person name="Li H."/>
            <person name="Huang H."/>
            <person name="Zhang F."/>
            <person name="Xu H."/>
            <person name="Li N."/>
            <person name="Zhao C."/>
            <person name="Li S."/>
            <person name="Dong L."/>
            <person name="Huang Y."/>
            <person name="Li L."/>
            <person name="Xi Y."/>
            <person name="Qi Q."/>
            <person name="Li W."/>
            <person name="Zhang B."/>
            <person name="Hu W."/>
            <person name="Zhang Y."/>
            <person name="Tian X."/>
            <person name="Jiao Y."/>
            <person name="Liang X."/>
            <person name="Jin J."/>
            <person name="Gao L."/>
            <person name="Zheng W."/>
            <person name="Hao B."/>
            <person name="Liu S.-M."/>
            <person name="Wang W."/>
            <person name="Yuan L."/>
            <person name="Cao M."/>
            <person name="McDermott J."/>
            <person name="Samudrala R."/>
            <person name="Wang J."/>
            <person name="Wong G.K.-S."/>
            <person name="Yang H."/>
        </authorList>
    </citation>
    <scope>NUCLEOTIDE SEQUENCE [LARGE SCALE GENOMIC DNA]</scope>
    <source>
        <strain>cv. Nipponbare</strain>
    </source>
</reference>
<reference key="6">
    <citation type="journal article" date="2003" name="Science">
        <title>Collection, mapping, and annotation of over 28,000 cDNA clones from japonica rice.</title>
        <authorList>
            <consortium name="The rice full-length cDNA consortium"/>
        </authorList>
    </citation>
    <scope>NUCLEOTIDE SEQUENCE [LARGE SCALE MRNA]</scope>
    <source>
        <strain>cv. Nipponbare</strain>
    </source>
</reference>
<reference key="7">
    <citation type="journal article" date="2012" name="Phytochemistry">
        <title>Characterization of hydroxycinnamoyltransferase from rice and its application for biological synthesis of hydroxycinnamoyl glycerols.</title>
        <authorList>
            <person name="Kim I.A."/>
            <person name="Kim B.G."/>
            <person name="Kim M."/>
            <person name="Ahn J.H."/>
        </authorList>
    </citation>
    <scope>TISSUE SPECIFICITY</scope>
</reference>
<proteinExistence type="evidence at transcript level"/>
<organism>
    <name type="scientific">Oryza sativa subsp. japonica</name>
    <name type="common">Rice</name>
    <dbReference type="NCBI Taxonomy" id="39947"/>
    <lineage>
        <taxon>Eukaryota</taxon>
        <taxon>Viridiplantae</taxon>
        <taxon>Streptophyta</taxon>
        <taxon>Embryophyta</taxon>
        <taxon>Tracheophyta</taxon>
        <taxon>Spermatophyta</taxon>
        <taxon>Magnoliopsida</taxon>
        <taxon>Liliopsida</taxon>
        <taxon>Poales</taxon>
        <taxon>Poaceae</taxon>
        <taxon>BOP clade</taxon>
        <taxon>Oryzoideae</taxon>
        <taxon>Oryzeae</taxon>
        <taxon>Oryzinae</taxon>
        <taxon>Oryza</taxon>
        <taxon>Oryza sativa</taxon>
    </lineage>
</organism>
<dbReference type="EC" id="2.3.1.-" evidence="5"/>
<dbReference type="EMBL" id="AL606594">
    <property type="protein sequence ID" value="CAE01635.3"/>
    <property type="status" value="ALT_SEQ"/>
    <property type="molecule type" value="Genomic_DNA"/>
</dbReference>
<dbReference type="EMBL" id="AP008210">
    <property type="protein sequence ID" value="BAF15139.1"/>
    <property type="molecule type" value="Genomic_DNA"/>
</dbReference>
<dbReference type="EMBL" id="AP014960">
    <property type="protein sequence ID" value="BAS89932.1"/>
    <property type="molecule type" value="Genomic_DNA"/>
</dbReference>
<dbReference type="EMBL" id="CM000141">
    <property type="protein sequence ID" value="EEE61270.1"/>
    <property type="molecule type" value="Genomic_DNA"/>
</dbReference>
<dbReference type="EMBL" id="AK104637">
    <property type="protein sequence ID" value="BAG96851.1"/>
    <property type="molecule type" value="mRNA"/>
</dbReference>
<dbReference type="EMBL" id="AK119237">
    <property type="protein sequence ID" value="BAG99596.1"/>
    <property type="molecule type" value="mRNA"/>
</dbReference>
<dbReference type="RefSeq" id="NP_001389319.1">
    <property type="nucleotide sequence ID" value="NM_001402390.1"/>
</dbReference>
<dbReference type="RefSeq" id="NP_001411209.1">
    <property type="nucleotide sequence ID" value="NM_001424280.1"/>
</dbReference>
<dbReference type="RefSeq" id="XP_015635773.1">
    <property type="nucleotide sequence ID" value="XM_015780287.1"/>
</dbReference>
<dbReference type="SMR" id="Q0JBZ8"/>
<dbReference type="FunCoup" id="Q0JBZ8">
    <property type="interactions" value="253"/>
</dbReference>
<dbReference type="STRING" id="39947.Q0JBZ8"/>
<dbReference type="PaxDb" id="39947-Q0JBZ8"/>
<dbReference type="EnsemblPlants" id="Os04t0500700-01">
    <property type="protein sequence ID" value="Os04t0500700-01"/>
    <property type="gene ID" value="Os04g0500700"/>
</dbReference>
<dbReference type="EnsemblPlants" id="Os04t0500700-02">
    <property type="protein sequence ID" value="Os04t0500700-02"/>
    <property type="gene ID" value="Os04g0500700"/>
</dbReference>
<dbReference type="GeneID" id="4336306"/>
<dbReference type="Gramene" id="Os04t0500700-01">
    <property type="protein sequence ID" value="Os04t0500700-01"/>
    <property type="gene ID" value="Os04g0500700"/>
</dbReference>
<dbReference type="Gramene" id="Os04t0500700-02">
    <property type="protein sequence ID" value="Os04t0500700-02"/>
    <property type="gene ID" value="Os04g0500700"/>
</dbReference>
<dbReference type="KEGG" id="dosa:Os04g0500700"/>
<dbReference type="eggNOG" id="ENOG502QTJX">
    <property type="taxonomic scope" value="Eukaryota"/>
</dbReference>
<dbReference type="HOGENOM" id="CLU_014546_2_0_1"/>
<dbReference type="InParanoid" id="Q0JBZ8"/>
<dbReference type="OMA" id="DRMDNDY"/>
<dbReference type="OrthoDB" id="671439at2759"/>
<dbReference type="PlantReactome" id="R-OSA-1119316">
    <property type="pathway name" value="Phenylpropanoid biosynthesis"/>
</dbReference>
<dbReference type="Proteomes" id="UP000000763">
    <property type="component" value="Chromosome 4"/>
</dbReference>
<dbReference type="Proteomes" id="UP000007752">
    <property type="component" value="Chromosome 4"/>
</dbReference>
<dbReference type="Proteomes" id="UP000059680">
    <property type="component" value="Chromosome 4"/>
</dbReference>
<dbReference type="GO" id="GO:0016747">
    <property type="term" value="F:acyltransferase activity, transferring groups other than amino-acyl groups"/>
    <property type="evidence" value="ECO:0000318"/>
    <property type="project" value="GO_Central"/>
</dbReference>
<dbReference type="GO" id="GO:0050734">
    <property type="term" value="F:hydroxycinnamoyltransferase activity"/>
    <property type="evidence" value="ECO:0007669"/>
    <property type="project" value="UniProtKB-ARBA"/>
</dbReference>
<dbReference type="FunFam" id="3.30.559.10:FF:000015">
    <property type="entry name" value="Spermidine hydroxycinnamoyl transferase"/>
    <property type="match status" value="1"/>
</dbReference>
<dbReference type="FunFam" id="3.30.559.10:FF:000008">
    <property type="entry name" value="Tryptamine hydroxycinnamoyl transferase"/>
    <property type="match status" value="1"/>
</dbReference>
<dbReference type="Gene3D" id="3.30.559.10">
    <property type="entry name" value="Chloramphenicol acetyltransferase-like domain"/>
    <property type="match status" value="2"/>
</dbReference>
<dbReference type="InterPro" id="IPR023213">
    <property type="entry name" value="CAT-like_dom_sf"/>
</dbReference>
<dbReference type="InterPro" id="IPR050317">
    <property type="entry name" value="Plant_Fungal_Acyltransferase"/>
</dbReference>
<dbReference type="PANTHER" id="PTHR31642:SF11">
    <property type="entry name" value="SHIKIMATE O-HYDROXYCINNAMOYLTRANSFERASE"/>
    <property type="match status" value="1"/>
</dbReference>
<dbReference type="PANTHER" id="PTHR31642">
    <property type="entry name" value="TRICHOTHECENE 3-O-ACETYLTRANSFERASE"/>
    <property type="match status" value="1"/>
</dbReference>
<dbReference type="Pfam" id="PF02458">
    <property type="entry name" value="Transferase"/>
    <property type="match status" value="1"/>
</dbReference>
<dbReference type="SUPFAM" id="SSF52777">
    <property type="entry name" value="CoA-dependent acyltransferases"/>
    <property type="match status" value="1"/>
</dbReference>
<evidence type="ECO:0000250" key="1">
    <source>
        <dbReference type="UniProtKB" id="Q5SMM6"/>
    </source>
</evidence>
<evidence type="ECO:0000250" key="2">
    <source>
        <dbReference type="UniProtKB" id="Q8W1W9"/>
    </source>
</evidence>
<evidence type="ECO:0000269" key="3">
    <source>
    </source>
</evidence>
<evidence type="ECO:0000303" key="4">
    <source>
    </source>
</evidence>
<evidence type="ECO:0000305" key="5"/>
<evidence type="ECO:0000312" key="6">
    <source>
        <dbReference type="EMBL" id="BAS89932.1"/>
    </source>
</evidence>
<evidence type="ECO:0000312" key="7">
    <source>
        <dbReference type="EMBL" id="CAE01635.3"/>
    </source>
</evidence>
<evidence type="ECO:0000312" key="8">
    <source>
        <dbReference type="EMBL" id="EEE61270.1"/>
    </source>
</evidence>
<comment type="function">
    <text evidence="1">Hydroxycinnamoyl transferase that catalyzes the transfer of an acyl from p-coumaryol-CoA to various acyl acceptors. Can use feruloyl-CoA and caffeoyl-CoA as acyl donors.</text>
</comment>
<comment type="tissue specificity">
    <text evidence="3">Expressed in roots, leaves, stems and seeds.</text>
</comment>
<comment type="similarity">
    <text evidence="5">Belongs to the plant acyltransferase family.</text>
</comment>
<comment type="sequence caution" evidence="5">
    <conflict type="erroneous gene model prediction">
        <sequence resource="EMBL-CDS" id="CAE01635"/>
    </conflict>
</comment>
<feature type="chain" id="PRO_0000437763" description="Hydroxycinnamoyltransferase 1">
    <location>
        <begin position="1"/>
        <end position="442"/>
    </location>
</feature>
<feature type="active site" description="Proton acceptor" evidence="2">
    <location>
        <position position="159"/>
    </location>
</feature>
<feature type="active site" description="Proton acceptor" evidence="2">
    <location>
        <position position="389"/>
    </location>
</feature>
<keyword id="KW-0012">Acyltransferase</keyword>
<keyword id="KW-1185">Reference proteome</keyword>
<keyword id="KW-0808">Transferase</keyword>
<name>HCT1_ORYSJ</name>
<accession>Q0JBZ8</accession>
<accession>Q7XT73</accession>
<protein>
    <recommendedName>
        <fullName evidence="5">Hydroxycinnamoyltransferase 1</fullName>
        <shortName evidence="4">OsHCT1</shortName>
        <ecNumber evidence="5">2.3.1.-</ecNumber>
    </recommendedName>
    <alternativeName>
        <fullName evidence="5">BAHD-like hydroxycinnamoyl transferase HCT1</fullName>
    </alternativeName>
</protein>